<sequence>MTQLSTKILWLFVAALGAICFGYLALQNGESVSAIYLVVAAVCIYMIGYRFYGSFVAYKVLELDKNRATPALVENDGRDFVPTNKAVLFGHHFAAIAGAGPLVGPILAAQMGYLPSMLWILVGGVLAGAVHDFVVLFISTRRKGRSLGEMIKDEMGKFTGGVAMVAIFGIMLIIIAILAMVVVKALAESPWGLFTIAMTIPIAIFMGIYMRFIRPGRVGEASIIGFVLLILAIHYGSVIAADPYWAKIFTLEAPTLAIVMMAYGFIASVLPVWFLLAPRDYLSTFLKIGVIVVMAVAIVLVAPDLQMPKANTQYFDGTGPVFAGGVFPFLFITIACGAISGFHALISSGTTPKMLENETHTLAVGYGSMLAESAVAIMALICACILHPGLYFAINSSSALIGTDVVNVAQTISSWGFSITPEEITTLTTNIGEYTILSRTGGAPTFAIGVALILHELFGGVDLMAFWYHFAILFEALFILTAVDAGTRACRFMVQDILGNVYKPLGDIHNYPAGLLATALSVAGWGYFLYQGAIDPKGGIYTLWPLFGVSNQMLAGMALLLATTILVKMGKARYTWVTLVPAVFVLVATLYGGIQKIMPYEEGNKIANAVSHVAAVSIQSQKIKDLEFKLNNTKDEKEISTIRKEISIATQNKVGNLLNAILCVFFMIATLLVIISCIGICLGKIKIPLKETKYIKIDEFQKI</sequence>
<proteinExistence type="inferred from homology"/>
<comment type="function">
    <text evidence="2">Involved in the uptake of dipeptides and tripeptides. May influence host-pathogen interactions. Involved in motility and agglutination, and has a role in stimulation of dendritic cells.</text>
</comment>
<comment type="subcellular location">
    <subcellularLocation>
        <location evidence="4">Cell inner membrane</location>
        <topology evidence="1">Multi-pass membrane protein</topology>
    </subcellularLocation>
</comment>
<comment type="disruption phenotype">
    <text evidence="2">Deletion mutant has a reduced ability to utilize a number of di- and tri-peptides as nitrogen sources, displays reduced motility and reduced agglutination compared to wild type.</text>
</comment>
<comment type="similarity">
    <text evidence="4">Belongs to the peptide transporter carbon starvation (CstA) (TC 2.A.114) family.</text>
</comment>
<evidence type="ECO:0000255" key="1"/>
<evidence type="ECO:0000269" key="2">
    <source>
    </source>
</evidence>
<evidence type="ECO:0000303" key="3">
    <source>
    </source>
</evidence>
<evidence type="ECO:0000305" key="4"/>
<evidence type="ECO:0000312" key="5">
    <source>
        <dbReference type="EMBL" id="CAL35037.1"/>
    </source>
</evidence>
<dbReference type="EMBL" id="AL111168">
    <property type="protein sequence ID" value="CAL35037.1"/>
    <property type="molecule type" value="Genomic_DNA"/>
</dbReference>
<dbReference type="PIR" id="D81365">
    <property type="entry name" value="D81365"/>
</dbReference>
<dbReference type="RefSeq" id="WP_002853255.1">
    <property type="nucleotide sequence ID" value="NZ_SZUC01000001.1"/>
</dbReference>
<dbReference type="RefSeq" id="YP_002344315.1">
    <property type="nucleotide sequence ID" value="NC_002163.1"/>
</dbReference>
<dbReference type="IntAct" id="Q0P9Y2">
    <property type="interactions" value="2"/>
</dbReference>
<dbReference type="STRING" id="192222.Cj0917c"/>
<dbReference type="TCDB" id="2.A.114.1.5">
    <property type="family name" value="the putative peptide transporter carbon starvation csta (csta) family"/>
</dbReference>
<dbReference type="PaxDb" id="192222-Cj0917c"/>
<dbReference type="EnsemblBacteria" id="CAL35037">
    <property type="protein sequence ID" value="CAL35037"/>
    <property type="gene ID" value="Cj0917c"/>
</dbReference>
<dbReference type="GeneID" id="905216"/>
<dbReference type="KEGG" id="cje:Cj0917c"/>
<dbReference type="PATRIC" id="fig|192222.6.peg.901"/>
<dbReference type="eggNOG" id="COG1966">
    <property type="taxonomic scope" value="Bacteria"/>
</dbReference>
<dbReference type="HOGENOM" id="CLU_010531_2_0_7"/>
<dbReference type="OrthoDB" id="9761224at2"/>
<dbReference type="Proteomes" id="UP000000799">
    <property type="component" value="Chromosome"/>
</dbReference>
<dbReference type="GO" id="GO:0005886">
    <property type="term" value="C:plasma membrane"/>
    <property type="evidence" value="ECO:0007669"/>
    <property type="project" value="UniProtKB-SubCell"/>
</dbReference>
<dbReference type="GO" id="GO:0009267">
    <property type="term" value="P:cellular response to starvation"/>
    <property type="evidence" value="ECO:0007669"/>
    <property type="project" value="InterPro"/>
</dbReference>
<dbReference type="GO" id="GO:0015833">
    <property type="term" value="P:peptide transport"/>
    <property type="evidence" value="ECO:0007669"/>
    <property type="project" value="UniProtKB-KW"/>
</dbReference>
<dbReference type="GO" id="GO:0015031">
    <property type="term" value="P:protein transport"/>
    <property type="evidence" value="ECO:0007669"/>
    <property type="project" value="UniProtKB-KW"/>
</dbReference>
<dbReference type="InterPro" id="IPR051605">
    <property type="entry name" value="CstA"/>
</dbReference>
<dbReference type="InterPro" id="IPR003706">
    <property type="entry name" value="CstA_N"/>
</dbReference>
<dbReference type="PANTHER" id="PTHR30252">
    <property type="entry name" value="INNER MEMBRANE PEPTIDE TRANSPORTER"/>
    <property type="match status" value="1"/>
</dbReference>
<dbReference type="PANTHER" id="PTHR30252:SF3">
    <property type="entry name" value="PYRUVATE_PROTON SYMPORTER BTST"/>
    <property type="match status" value="1"/>
</dbReference>
<dbReference type="Pfam" id="PF02554">
    <property type="entry name" value="CstA"/>
    <property type="match status" value="1"/>
</dbReference>
<reference key="1">
    <citation type="journal article" date="2000" name="Nature">
        <title>The genome sequence of the food-borne pathogen Campylobacter jejuni reveals hypervariable sequences.</title>
        <authorList>
            <person name="Parkhill J."/>
            <person name="Wren B.W."/>
            <person name="Mungall K.L."/>
            <person name="Ketley J.M."/>
            <person name="Churcher C.M."/>
            <person name="Basham D."/>
            <person name="Chillingworth T."/>
            <person name="Davies R.M."/>
            <person name="Feltwell T."/>
            <person name="Holroyd S."/>
            <person name="Jagels K."/>
            <person name="Karlyshev A.V."/>
            <person name="Moule S."/>
            <person name="Pallen M.J."/>
            <person name="Penn C.W."/>
            <person name="Quail M.A."/>
            <person name="Rajandream M.A."/>
            <person name="Rutherford K.M."/>
            <person name="van Vliet A.H.M."/>
            <person name="Whitehead S."/>
            <person name="Barrell B.G."/>
        </authorList>
    </citation>
    <scope>NUCLEOTIDE SEQUENCE [LARGE SCALE GENOMIC DNA]</scope>
    <source>
        <strain>ATCC 700819 / NCTC 11168</strain>
    </source>
</reference>
<reference key="2">
    <citation type="journal article" date="2013" name="J. Med. Microbiol.">
        <title>Campylobacter jejuni carbon starvation protein A (CstA) is involved in peptide utilization, motility and agglutination, and has a role in stimulation of dendritic cells.</title>
        <authorList>
            <person name="Rasmussen J.J."/>
            <person name="Vegge C.S."/>
            <person name="Froekiaer H."/>
            <person name="Howlett R.M."/>
            <person name="Krogfelt K.A."/>
            <person name="Kelly D.J."/>
            <person name="Ingmer H."/>
        </authorList>
    </citation>
    <scope>FUNCTION</scope>
    <scope>DISRUPTION PHENOTYPE</scope>
    <source>
        <strain>ATCC 700819 / NCTC 11168</strain>
    </source>
</reference>
<name>CSTA_CAMJE</name>
<keyword id="KW-0997">Cell inner membrane</keyword>
<keyword id="KW-1003">Cell membrane</keyword>
<keyword id="KW-0472">Membrane</keyword>
<keyword id="KW-0571">Peptide transport</keyword>
<keyword id="KW-0653">Protein transport</keyword>
<keyword id="KW-1185">Reference proteome</keyword>
<keyword id="KW-0812">Transmembrane</keyword>
<keyword id="KW-1133">Transmembrane helix</keyword>
<keyword id="KW-0813">Transport</keyword>
<gene>
    <name evidence="3" type="primary">cstA</name>
    <name evidence="5" type="ordered locus">Cj0917c</name>
</gene>
<organism>
    <name type="scientific">Campylobacter jejuni subsp. jejuni serotype O:2 (strain ATCC 700819 / NCTC 11168)</name>
    <dbReference type="NCBI Taxonomy" id="192222"/>
    <lineage>
        <taxon>Bacteria</taxon>
        <taxon>Pseudomonadati</taxon>
        <taxon>Campylobacterota</taxon>
        <taxon>Epsilonproteobacteria</taxon>
        <taxon>Campylobacterales</taxon>
        <taxon>Campylobacteraceae</taxon>
        <taxon>Campylobacter</taxon>
    </lineage>
</organism>
<accession>Q0P9Y2</accession>
<feature type="chain" id="PRO_0000443387" description="Peptide transporter CstA">
    <location>
        <begin position="1"/>
        <end position="703"/>
    </location>
</feature>
<feature type="transmembrane region" description="Helical" evidence="1">
    <location>
        <begin position="6"/>
        <end position="26"/>
    </location>
</feature>
<feature type="transmembrane region" description="Helical" evidence="1">
    <location>
        <begin position="29"/>
        <end position="49"/>
    </location>
</feature>
<feature type="transmembrane region" description="Helical" evidence="1">
    <location>
        <begin position="87"/>
        <end position="107"/>
    </location>
</feature>
<feature type="transmembrane region" description="Helical" evidence="1">
    <location>
        <begin position="118"/>
        <end position="138"/>
    </location>
</feature>
<feature type="transmembrane region" description="Helical" evidence="1">
    <location>
        <begin position="162"/>
        <end position="182"/>
    </location>
</feature>
<feature type="transmembrane region" description="Helical" evidence="1">
    <location>
        <begin position="190"/>
        <end position="210"/>
    </location>
</feature>
<feature type="transmembrane region" description="Helical" evidence="1">
    <location>
        <begin position="221"/>
        <end position="241"/>
    </location>
</feature>
<feature type="transmembrane region" description="Helical" evidence="1">
    <location>
        <begin position="256"/>
        <end position="276"/>
    </location>
</feature>
<feature type="transmembrane region" description="Helical" evidence="1">
    <location>
        <begin position="282"/>
        <end position="302"/>
    </location>
</feature>
<feature type="transmembrane region" description="Helical" evidence="1">
    <location>
        <begin position="319"/>
        <end position="339"/>
    </location>
</feature>
<feature type="transmembrane region" description="Helical" evidence="1">
    <location>
        <begin position="374"/>
        <end position="394"/>
    </location>
</feature>
<feature type="transmembrane region" description="Helical" evidence="1">
    <location>
        <begin position="463"/>
        <end position="483"/>
    </location>
</feature>
<feature type="transmembrane region" description="Helical" evidence="1">
    <location>
        <begin position="514"/>
        <end position="534"/>
    </location>
</feature>
<feature type="transmembrane region" description="Helical" evidence="1">
    <location>
        <begin position="547"/>
        <end position="567"/>
    </location>
</feature>
<feature type="transmembrane region" description="Helical" evidence="1">
    <location>
        <begin position="574"/>
        <end position="594"/>
    </location>
</feature>
<feature type="transmembrane region" description="Helical" evidence="1">
    <location>
        <begin position="660"/>
        <end position="680"/>
    </location>
</feature>
<protein>
    <recommendedName>
        <fullName evidence="4">Peptide transporter CstA</fullName>
    </recommendedName>
    <alternativeName>
        <fullName evidence="3">Carbon starvation protein A</fullName>
    </alternativeName>
</protein>